<name>F16PA_SHEB9</name>
<feature type="chain" id="PRO_0000364702" description="Fructose-1,6-bisphosphatase class 1">
    <location>
        <begin position="1"/>
        <end position="325"/>
    </location>
</feature>
<feature type="binding site" evidence="1">
    <location>
        <position position="84"/>
    </location>
    <ligand>
        <name>Mg(2+)</name>
        <dbReference type="ChEBI" id="CHEBI:18420"/>
        <label>1</label>
    </ligand>
</feature>
<feature type="binding site" evidence="1">
    <location>
        <position position="103"/>
    </location>
    <ligand>
        <name>Mg(2+)</name>
        <dbReference type="ChEBI" id="CHEBI:18420"/>
        <label>1</label>
    </ligand>
</feature>
<feature type="binding site" evidence="1">
    <location>
        <position position="103"/>
    </location>
    <ligand>
        <name>Mg(2+)</name>
        <dbReference type="ChEBI" id="CHEBI:18420"/>
        <label>2</label>
    </ligand>
</feature>
<feature type="binding site" evidence="1">
    <location>
        <position position="105"/>
    </location>
    <ligand>
        <name>Mg(2+)</name>
        <dbReference type="ChEBI" id="CHEBI:18420"/>
        <label>1</label>
    </ligand>
</feature>
<feature type="binding site" evidence="1">
    <location>
        <begin position="106"/>
        <end position="109"/>
    </location>
    <ligand>
        <name>substrate</name>
    </ligand>
</feature>
<feature type="binding site" evidence="1">
    <location>
        <position position="106"/>
    </location>
    <ligand>
        <name>Mg(2+)</name>
        <dbReference type="ChEBI" id="CHEBI:18420"/>
        <label>2</label>
    </ligand>
</feature>
<feature type="binding site" evidence="1">
    <location>
        <position position="196"/>
    </location>
    <ligand>
        <name>substrate</name>
    </ligand>
</feature>
<feature type="binding site" evidence="1">
    <location>
        <position position="262"/>
    </location>
    <ligand>
        <name>substrate</name>
    </ligand>
</feature>
<feature type="binding site" evidence="1">
    <location>
        <position position="268"/>
    </location>
    <ligand>
        <name>Mg(2+)</name>
        <dbReference type="ChEBI" id="CHEBI:18420"/>
        <label>2</label>
    </ligand>
</feature>
<protein>
    <recommendedName>
        <fullName evidence="1">Fructose-1,6-bisphosphatase class 1</fullName>
        <shortName evidence="1">FBPase class 1</shortName>
        <ecNumber evidence="1">3.1.3.11</ecNumber>
    </recommendedName>
    <alternativeName>
        <fullName evidence="1">D-fructose-1,6-bisphosphate 1-phosphohydrolase class 1</fullName>
    </alternativeName>
</protein>
<dbReference type="EC" id="3.1.3.11" evidence="1"/>
<dbReference type="EMBL" id="CP000891">
    <property type="protein sequence ID" value="ABX51004.1"/>
    <property type="molecule type" value="Genomic_DNA"/>
</dbReference>
<dbReference type="RefSeq" id="WP_006084170.1">
    <property type="nucleotide sequence ID" value="NC_009997.1"/>
</dbReference>
<dbReference type="SMR" id="A9L375"/>
<dbReference type="KEGG" id="sbn:Sbal195_3844"/>
<dbReference type="HOGENOM" id="CLU_039977_0_0_6"/>
<dbReference type="UniPathway" id="UPA00138"/>
<dbReference type="Proteomes" id="UP000000770">
    <property type="component" value="Chromosome"/>
</dbReference>
<dbReference type="GO" id="GO:0005829">
    <property type="term" value="C:cytosol"/>
    <property type="evidence" value="ECO:0007669"/>
    <property type="project" value="TreeGrafter"/>
</dbReference>
<dbReference type="GO" id="GO:0042132">
    <property type="term" value="F:fructose 1,6-bisphosphate 1-phosphatase activity"/>
    <property type="evidence" value="ECO:0007669"/>
    <property type="project" value="UniProtKB-UniRule"/>
</dbReference>
<dbReference type="GO" id="GO:0000287">
    <property type="term" value="F:magnesium ion binding"/>
    <property type="evidence" value="ECO:0007669"/>
    <property type="project" value="UniProtKB-UniRule"/>
</dbReference>
<dbReference type="GO" id="GO:0030388">
    <property type="term" value="P:fructose 1,6-bisphosphate metabolic process"/>
    <property type="evidence" value="ECO:0007669"/>
    <property type="project" value="TreeGrafter"/>
</dbReference>
<dbReference type="GO" id="GO:0006002">
    <property type="term" value="P:fructose 6-phosphate metabolic process"/>
    <property type="evidence" value="ECO:0007669"/>
    <property type="project" value="TreeGrafter"/>
</dbReference>
<dbReference type="GO" id="GO:0006000">
    <property type="term" value="P:fructose metabolic process"/>
    <property type="evidence" value="ECO:0007669"/>
    <property type="project" value="TreeGrafter"/>
</dbReference>
<dbReference type="GO" id="GO:0006094">
    <property type="term" value="P:gluconeogenesis"/>
    <property type="evidence" value="ECO:0007669"/>
    <property type="project" value="UniProtKB-UniRule"/>
</dbReference>
<dbReference type="GO" id="GO:0005986">
    <property type="term" value="P:sucrose biosynthetic process"/>
    <property type="evidence" value="ECO:0007669"/>
    <property type="project" value="TreeGrafter"/>
</dbReference>
<dbReference type="CDD" id="cd00354">
    <property type="entry name" value="FBPase"/>
    <property type="match status" value="1"/>
</dbReference>
<dbReference type="FunFam" id="3.30.540.10:FF:000006">
    <property type="entry name" value="Fructose-1,6-bisphosphatase class 1"/>
    <property type="match status" value="1"/>
</dbReference>
<dbReference type="FunFam" id="3.40.190.80:FF:000011">
    <property type="entry name" value="Fructose-1,6-bisphosphatase class 1"/>
    <property type="match status" value="1"/>
</dbReference>
<dbReference type="Gene3D" id="3.40.190.80">
    <property type="match status" value="1"/>
</dbReference>
<dbReference type="Gene3D" id="3.30.540.10">
    <property type="entry name" value="Fructose-1,6-Bisphosphatase, subunit A, domain 1"/>
    <property type="match status" value="1"/>
</dbReference>
<dbReference type="HAMAP" id="MF_01855">
    <property type="entry name" value="FBPase_class1"/>
    <property type="match status" value="1"/>
</dbReference>
<dbReference type="InterPro" id="IPR044015">
    <property type="entry name" value="FBPase_C_dom"/>
</dbReference>
<dbReference type="InterPro" id="IPR000146">
    <property type="entry name" value="FBPase_class-1"/>
</dbReference>
<dbReference type="InterPro" id="IPR033391">
    <property type="entry name" value="FBPase_N"/>
</dbReference>
<dbReference type="InterPro" id="IPR028343">
    <property type="entry name" value="FBPtase"/>
</dbReference>
<dbReference type="NCBIfam" id="NF006779">
    <property type="entry name" value="PRK09293.1-3"/>
    <property type="match status" value="1"/>
</dbReference>
<dbReference type="NCBIfam" id="NF006780">
    <property type="entry name" value="PRK09293.1-4"/>
    <property type="match status" value="1"/>
</dbReference>
<dbReference type="PANTHER" id="PTHR11556">
    <property type="entry name" value="FRUCTOSE-1,6-BISPHOSPHATASE-RELATED"/>
    <property type="match status" value="1"/>
</dbReference>
<dbReference type="PANTHER" id="PTHR11556:SF35">
    <property type="entry name" value="SEDOHEPTULOSE-1,7-BISPHOSPHATASE, CHLOROPLASTIC"/>
    <property type="match status" value="1"/>
</dbReference>
<dbReference type="Pfam" id="PF00316">
    <property type="entry name" value="FBPase"/>
    <property type="match status" value="1"/>
</dbReference>
<dbReference type="Pfam" id="PF18913">
    <property type="entry name" value="FBPase_C"/>
    <property type="match status" value="1"/>
</dbReference>
<dbReference type="PIRSF" id="PIRSF500210">
    <property type="entry name" value="FBPtase"/>
    <property type="match status" value="1"/>
</dbReference>
<dbReference type="PIRSF" id="PIRSF000904">
    <property type="entry name" value="FBPtase_SBPase"/>
    <property type="match status" value="1"/>
</dbReference>
<dbReference type="PRINTS" id="PR00115">
    <property type="entry name" value="F16BPHPHTASE"/>
</dbReference>
<dbReference type="SUPFAM" id="SSF56655">
    <property type="entry name" value="Carbohydrate phosphatase"/>
    <property type="match status" value="1"/>
</dbReference>
<proteinExistence type="inferred from homology"/>
<sequence>MQTLTQHLTSQAVNDSLSHLILTLADTSKAISHAVRHGALAGVLGATEQENVQGETQKKLDIITNDMLKDALKADGTVRGLASEEEDHVVEVRQNGQYLVCFDPLDGSSNIDINSLVGTIFSILPAPAGELTETSFLQSGRAQLAAGYVLYGPSTMLALTTGQGVQLFTLDPETNEFLLTNAAMSISPETQEFAINMSNQRFWEAPMQTYIADLLLGKIGPREKSFNMRWIAAMVGDVHRVLSRGGIFTYPSDNKDPKKPYKLRLMYEANPMAFLVEQAGGKASTGYETILDITPTHIHQRVAVILGSANEVDACLSYHGIDSHK</sequence>
<evidence type="ECO:0000255" key="1">
    <source>
        <dbReference type="HAMAP-Rule" id="MF_01855"/>
    </source>
</evidence>
<comment type="catalytic activity">
    <reaction evidence="1">
        <text>beta-D-fructose 1,6-bisphosphate + H2O = beta-D-fructose 6-phosphate + phosphate</text>
        <dbReference type="Rhea" id="RHEA:11064"/>
        <dbReference type="ChEBI" id="CHEBI:15377"/>
        <dbReference type="ChEBI" id="CHEBI:32966"/>
        <dbReference type="ChEBI" id="CHEBI:43474"/>
        <dbReference type="ChEBI" id="CHEBI:57634"/>
        <dbReference type="EC" id="3.1.3.11"/>
    </reaction>
</comment>
<comment type="cofactor">
    <cofactor evidence="1">
        <name>Mg(2+)</name>
        <dbReference type="ChEBI" id="CHEBI:18420"/>
    </cofactor>
    <text evidence="1">Binds 2 magnesium ions per subunit.</text>
</comment>
<comment type="pathway">
    <text evidence="1">Carbohydrate biosynthesis; gluconeogenesis.</text>
</comment>
<comment type="subunit">
    <text evidence="1">Homotetramer.</text>
</comment>
<comment type="subcellular location">
    <subcellularLocation>
        <location evidence="1">Cytoplasm</location>
    </subcellularLocation>
</comment>
<comment type="similarity">
    <text evidence="1">Belongs to the FBPase class 1 family.</text>
</comment>
<accession>A9L375</accession>
<gene>
    <name evidence="1" type="primary">fbp</name>
    <name type="ordered locus">Sbal195_3844</name>
</gene>
<keyword id="KW-0119">Carbohydrate metabolism</keyword>
<keyword id="KW-0963">Cytoplasm</keyword>
<keyword id="KW-0378">Hydrolase</keyword>
<keyword id="KW-0460">Magnesium</keyword>
<keyword id="KW-0479">Metal-binding</keyword>
<reference key="1">
    <citation type="submission" date="2007-11" db="EMBL/GenBank/DDBJ databases">
        <title>Complete sequence of chromosome of Shewanella baltica OS195.</title>
        <authorList>
            <consortium name="US DOE Joint Genome Institute"/>
            <person name="Copeland A."/>
            <person name="Lucas S."/>
            <person name="Lapidus A."/>
            <person name="Barry K."/>
            <person name="Glavina del Rio T."/>
            <person name="Dalin E."/>
            <person name="Tice H."/>
            <person name="Pitluck S."/>
            <person name="Chain P."/>
            <person name="Malfatti S."/>
            <person name="Shin M."/>
            <person name="Vergez L."/>
            <person name="Schmutz J."/>
            <person name="Larimer F."/>
            <person name="Land M."/>
            <person name="Hauser L."/>
            <person name="Kyrpides N."/>
            <person name="Kim E."/>
            <person name="Brettar I."/>
            <person name="Rodrigues J."/>
            <person name="Konstantinidis K."/>
            <person name="Klappenbach J."/>
            <person name="Hofle M."/>
            <person name="Tiedje J."/>
            <person name="Richardson P."/>
        </authorList>
    </citation>
    <scope>NUCLEOTIDE SEQUENCE [LARGE SCALE GENOMIC DNA]</scope>
    <source>
        <strain>OS195</strain>
    </source>
</reference>
<organism>
    <name type="scientific">Shewanella baltica (strain OS195)</name>
    <dbReference type="NCBI Taxonomy" id="399599"/>
    <lineage>
        <taxon>Bacteria</taxon>
        <taxon>Pseudomonadati</taxon>
        <taxon>Pseudomonadota</taxon>
        <taxon>Gammaproteobacteria</taxon>
        <taxon>Alteromonadales</taxon>
        <taxon>Shewanellaceae</taxon>
        <taxon>Shewanella</taxon>
    </lineage>
</organism>